<organism>
    <name type="scientific">Homo sapiens</name>
    <name type="common">Human</name>
    <dbReference type="NCBI Taxonomy" id="9606"/>
    <lineage>
        <taxon>Eukaryota</taxon>
        <taxon>Metazoa</taxon>
        <taxon>Chordata</taxon>
        <taxon>Craniata</taxon>
        <taxon>Vertebrata</taxon>
        <taxon>Euteleostomi</taxon>
        <taxon>Mammalia</taxon>
        <taxon>Eutheria</taxon>
        <taxon>Euarchontoglires</taxon>
        <taxon>Primates</taxon>
        <taxon>Haplorrhini</taxon>
        <taxon>Catarrhini</taxon>
        <taxon>Hominidae</taxon>
        <taxon>Homo</taxon>
    </lineage>
</organism>
<sequence>MAASAHGSVWGPLRLGIPGLCCRRPPLGLYARMRRLPGPEVSGRSVAAASGPGAWGTDHYCLELLRKRDYEGYLCSLLLPAESRSSVFALRAFNVELAQVKDSVSEKTIGLMRMQFWKKTVEDIYCDNPPHQPVAIELWKAVKRHNLTKRWLMKIVDEREKNLDDKAYRNIKELENYAENTQSSLLYLTLEILGIKDLHADHAASHIGKAQGIVTCLRATPYHGSRRKVFLPMDICMLHGVSQEDFLRRNQDKNVRDVIYDIASQAHLHLKHARSFHKTVPVKAFPAFLQTVSLEDFLKKIQRVDFDIFHPSLQQKNTLLPLYLYIQSWRKTY</sequence>
<evidence type="ECO:0000255" key="1"/>
<evidence type="ECO:0000269" key="2">
    <source>
    </source>
</evidence>
<evidence type="ECO:0000269" key="3">
    <source>
    </source>
</evidence>
<evidence type="ECO:0000269" key="4">
    <source>
    </source>
</evidence>
<evidence type="ECO:0000269" key="5">
    <source>
    </source>
</evidence>
<evidence type="ECO:0000269" key="6">
    <source>
    </source>
</evidence>
<evidence type="ECO:0000269" key="7">
    <source>
    </source>
</evidence>
<evidence type="ECO:0000269" key="8">
    <source>
    </source>
</evidence>
<evidence type="ECO:0000303" key="9">
    <source>
    </source>
</evidence>
<evidence type="ECO:0000303" key="10">
    <source ref="1"/>
</evidence>
<evidence type="ECO:0000305" key="11"/>
<reference key="1">
    <citation type="submission" date="2003-10" db="EMBL/GenBank/DDBJ databases">
        <title>Cloning of a novel putative phytoene synthase.</title>
        <authorList>
            <person name="Zheng H."/>
            <person name="Xie Y."/>
            <person name="Mao Y."/>
        </authorList>
    </citation>
    <scope>NUCLEOTIDE SEQUENCE [MRNA] (ISOFORM 3)</scope>
</reference>
<reference key="2">
    <citation type="journal article" date="2006" name="Nature">
        <title>DNA sequence and analysis of human chromosome 8.</title>
        <authorList>
            <person name="Nusbaum C."/>
            <person name="Mikkelsen T.S."/>
            <person name="Zody M.C."/>
            <person name="Asakawa S."/>
            <person name="Taudien S."/>
            <person name="Garber M."/>
            <person name="Kodira C.D."/>
            <person name="Schueler M.G."/>
            <person name="Shimizu A."/>
            <person name="Whittaker C.A."/>
            <person name="Chang J.L."/>
            <person name="Cuomo C.A."/>
            <person name="Dewar K."/>
            <person name="FitzGerald M.G."/>
            <person name="Yang X."/>
            <person name="Allen N.R."/>
            <person name="Anderson S."/>
            <person name="Asakawa T."/>
            <person name="Blechschmidt K."/>
            <person name="Bloom T."/>
            <person name="Borowsky M.L."/>
            <person name="Butler J."/>
            <person name="Cook A."/>
            <person name="Corum B."/>
            <person name="DeArellano K."/>
            <person name="DeCaprio D."/>
            <person name="Dooley K.T."/>
            <person name="Dorris L. III"/>
            <person name="Engels R."/>
            <person name="Gloeckner G."/>
            <person name="Hafez N."/>
            <person name="Hagopian D.S."/>
            <person name="Hall J.L."/>
            <person name="Ishikawa S.K."/>
            <person name="Jaffe D.B."/>
            <person name="Kamat A."/>
            <person name="Kudoh J."/>
            <person name="Lehmann R."/>
            <person name="Lokitsang T."/>
            <person name="Macdonald P."/>
            <person name="Major J.E."/>
            <person name="Matthews C.D."/>
            <person name="Mauceli E."/>
            <person name="Menzel U."/>
            <person name="Mihalev A.H."/>
            <person name="Minoshima S."/>
            <person name="Murayama Y."/>
            <person name="Naylor J.W."/>
            <person name="Nicol R."/>
            <person name="Nguyen C."/>
            <person name="O'Leary S.B."/>
            <person name="O'Neill K."/>
            <person name="Parker S.C.J."/>
            <person name="Polley A."/>
            <person name="Raymond C.K."/>
            <person name="Reichwald K."/>
            <person name="Rodriguez J."/>
            <person name="Sasaki T."/>
            <person name="Schilhabel M."/>
            <person name="Siddiqui R."/>
            <person name="Smith C.L."/>
            <person name="Sneddon T.P."/>
            <person name="Talamas J.A."/>
            <person name="Tenzin P."/>
            <person name="Topham K."/>
            <person name="Venkataraman V."/>
            <person name="Wen G."/>
            <person name="Yamazaki S."/>
            <person name="Young S.K."/>
            <person name="Zeng Q."/>
            <person name="Zimmer A.R."/>
            <person name="Rosenthal A."/>
            <person name="Birren B.W."/>
            <person name="Platzer M."/>
            <person name="Shimizu N."/>
            <person name="Lander E.S."/>
        </authorList>
    </citation>
    <scope>NUCLEOTIDE SEQUENCE [LARGE SCALE GENOMIC DNA]</scope>
</reference>
<reference key="3">
    <citation type="submission" date="2005-07" db="EMBL/GenBank/DDBJ databases">
        <authorList>
            <person name="Mural R.J."/>
            <person name="Istrail S."/>
            <person name="Sutton G.G."/>
            <person name="Florea L."/>
            <person name="Halpern A.L."/>
            <person name="Mobarry C.M."/>
            <person name="Lippert R."/>
            <person name="Walenz B."/>
            <person name="Shatkay H."/>
            <person name="Dew I."/>
            <person name="Miller J.R."/>
            <person name="Flanigan M.J."/>
            <person name="Edwards N.J."/>
            <person name="Bolanos R."/>
            <person name="Fasulo D."/>
            <person name="Halldorsson B.V."/>
            <person name="Hannenhalli S."/>
            <person name="Turner R."/>
            <person name="Yooseph S."/>
            <person name="Lu F."/>
            <person name="Nusskern D.R."/>
            <person name="Shue B.C."/>
            <person name="Zheng X.H."/>
            <person name="Zhong F."/>
            <person name="Delcher A.L."/>
            <person name="Huson D.H."/>
            <person name="Kravitz S.A."/>
            <person name="Mouchard L."/>
            <person name="Reinert K."/>
            <person name="Remington K.A."/>
            <person name="Clark A.G."/>
            <person name="Waterman M.S."/>
            <person name="Eichler E.E."/>
            <person name="Adams M.D."/>
            <person name="Hunkapiller M.W."/>
            <person name="Myers E.W."/>
            <person name="Venter J.C."/>
        </authorList>
    </citation>
    <scope>NUCLEOTIDE SEQUENCE [LARGE SCALE GENOMIC DNA]</scope>
</reference>
<reference key="4">
    <citation type="journal article" date="2004" name="Genome Res.">
        <title>The status, quality, and expansion of the NIH full-length cDNA project: the Mammalian Gene Collection (MGC).</title>
        <authorList>
            <consortium name="The MGC Project Team"/>
        </authorList>
    </citation>
    <scope>NUCLEOTIDE SEQUENCE [LARGE SCALE MRNA] (ISOFORM 2)</scope>
    <source>
        <tissue>Brain</tissue>
    </source>
</reference>
<reference key="5">
    <citation type="journal article" date="2004" name="Nat. Genet.">
        <title>Complete sequencing and characterization of 21,243 full-length human cDNAs.</title>
        <authorList>
            <person name="Ota T."/>
            <person name="Suzuki Y."/>
            <person name="Nishikawa T."/>
            <person name="Otsuki T."/>
            <person name="Sugiyama T."/>
            <person name="Irie R."/>
            <person name="Wakamatsu A."/>
            <person name="Hayashi K."/>
            <person name="Sato H."/>
            <person name="Nagai K."/>
            <person name="Kimura K."/>
            <person name="Makita H."/>
            <person name="Sekine M."/>
            <person name="Obayashi M."/>
            <person name="Nishi T."/>
            <person name="Shibahara T."/>
            <person name="Tanaka T."/>
            <person name="Ishii S."/>
            <person name="Yamamoto J."/>
            <person name="Saito K."/>
            <person name="Kawai Y."/>
            <person name="Isono Y."/>
            <person name="Nakamura Y."/>
            <person name="Nagahari K."/>
            <person name="Murakami K."/>
            <person name="Yasuda T."/>
            <person name="Iwayanagi T."/>
            <person name="Wagatsuma M."/>
            <person name="Shiratori A."/>
            <person name="Sudo H."/>
            <person name="Hosoiri T."/>
            <person name="Kaku Y."/>
            <person name="Kodaira H."/>
            <person name="Kondo H."/>
            <person name="Sugawara M."/>
            <person name="Takahashi M."/>
            <person name="Kanda K."/>
            <person name="Yokoi T."/>
            <person name="Furuya T."/>
            <person name="Kikkawa E."/>
            <person name="Omura Y."/>
            <person name="Abe K."/>
            <person name="Kamihara K."/>
            <person name="Katsuta N."/>
            <person name="Sato K."/>
            <person name="Tanikawa M."/>
            <person name="Yamazaki M."/>
            <person name="Ninomiya K."/>
            <person name="Ishibashi T."/>
            <person name="Yamashita H."/>
            <person name="Murakawa K."/>
            <person name="Fujimori K."/>
            <person name="Tanai H."/>
            <person name="Kimata M."/>
            <person name="Watanabe M."/>
            <person name="Hiraoka S."/>
            <person name="Chiba Y."/>
            <person name="Ishida S."/>
            <person name="Ono Y."/>
            <person name="Takiguchi S."/>
            <person name="Watanabe S."/>
            <person name="Yosida M."/>
            <person name="Hotuta T."/>
            <person name="Kusano J."/>
            <person name="Kanehori K."/>
            <person name="Takahashi-Fujii A."/>
            <person name="Hara H."/>
            <person name="Tanase T.-O."/>
            <person name="Nomura Y."/>
            <person name="Togiya S."/>
            <person name="Komai F."/>
            <person name="Hara R."/>
            <person name="Takeuchi K."/>
            <person name="Arita M."/>
            <person name="Imose N."/>
            <person name="Musashino K."/>
            <person name="Yuuki H."/>
            <person name="Oshima A."/>
            <person name="Sasaki N."/>
            <person name="Aotsuka S."/>
            <person name="Yoshikawa Y."/>
            <person name="Matsunawa H."/>
            <person name="Ichihara T."/>
            <person name="Shiohata N."/>
            <person name="Sano S."/>
            <person name="Moriya S."/>
            <person name="Momiyama H."/>
            <person name="Satoh N."/>
            <person name="Takami S."/>
            <person name="Terashima Y."/>
            <person name="Suzuki O."/>
            <person name="Nakagawa S."/>
            <person name="Senoh A."/>
            <person name="Mizoguchi H."/>
            <person name="Goto Y."/>
            <person name="Shimizu F."/>
            <person name="Wakebe H."/>
            <person name="Hishigaki H."/>
            <person name="Watanabe T."/>
            <person name="Sugiyama A."/>
            <person name="Takemoto M."/>
            <person name="Kawakami B."/>
            <person name="Yamazaki M."/>
            <person name="Watanabe K."/>
            <person name="Kumagai A."/>
            <person name="Itakura S."/>
            <person name="Fukuzumi Y."/>
            <person name="Fujimori Y."/>
            <person name="Komiyama M."/>
            <person name="Tashiro H."/>
            <person name="Tanigami A."/>
            <person name="Fujiwara T."/>
            <person name="Ono T."/>
            <person name="Yamada K."/>
            <person name="Fujii Y."/>
            <person name="Ozaki K."/>
            <person name="Hirao M."/>
            <person name="Ohmori Y."/>
            <person name="Kawabata A."/>
            <person name="Hikiji T."/>
            <person name="Kobatake N."/>
            <person name="Inagaki H."/>
            <person name="Ikema Y."/>
            <person name="Okamoto S."/>
            <person name="Okitani R."/>
            <person name="Kawakami T."/>
            <person name="Noguchi S."/>
            <person name="Itoh T."/>
            <person name="Shigeta K."/>
            <person name="Senba T."/>
            <person name="Matsumura K."/>
            <person name="Nakajima Y."/>
            <person name="Mizuno T."/>
            <person name="Morinaga M."/>
            <person name="Sasaki M."/>
            <person name="Togashi T."/>
            <person name="Oyama M."/>
            <person name="Hata H."/>
            <person name="Watanabe M."/>
            <person name="Komatsu T."/>
            <person name="Mizushima-Sugano J."/>
            <person name="Satoh T."/>
            <person name="Shirai Y."/>
            <person name="Takahashi Y."/>
            <person name="Nakagawa K."/>
            <person name="Okumura K."/>
            <person name="Nagase T."/>
            <person name="Nomura N."/>
            <person name="Kikuchi H."/>
            <person name="Masuho Y."/>
            <person name="Yamashita R."/>
            <person name="Nakai K."/>
            <person name="Yada T."/>
            <person name="Nakamura Y."/>
            <person name="Ohara O."/>
            <person name="Isogai T."/>
            <person name="Sugano S."/>
        </authorList>
    </citation>
    <scope>NUCLEOTIDE SEQUENCE [LARGE SCALE MRNA] OF 20-322 (ISOFORM 1)</scope>
</reference>
<reference key="6">
    <citation type="journal article" date="2008" name="Cell">
        <title>A mitochondrial protein compendium elucidates complex I disease biology.</title>
        <authorList>
            <person name="Pagliarini D.J."/>
            <person name="Calvo S.E."/>
            <person name="Chang B."/>
            <person name="Sheth S.A."/>
            <person name="Vafai S.B."/>
            <person name="Ong S.E."/>
            <person name="Walford G.A."/>
            <person name="Sugiana C."/>
            <person name="Boneh A."/>
            <person name="Chen W.K."/>
            <person name="Hill D.E."/>
            <person name="Vidal M."/>
            <person name="Evans J.G."/>
            <person name="Thorburn D.R."/>
            <person name="Carr S.A."/>
            <person name="Mootha V.K."/>
        </authorList>
    </citation>
    <scope>FUNCTION</scope>
    <scope>VARIANT MC1DN17 ARG-99</scope>
</reference>
<reference key="7">
    <citation type="journal article" date="2011" name="J. Mol. Biol.">
        <title>Mutations in the gene encoding C8orf38 block complex I assembly by inhibiting production of the mitochondria-encoded subunit ND1.</title>
        <authorList>
            <person name="McKenzie M."/>
            <person name="Tucker E.J."/>
            <person name="Compton A.G."/>
            <person name="Lazarou M."/>
            <person name="George C."/>
            <person name="Thorburn D.R."/>
            <person name="Ryan M.T."/>
        </authorList>
    </citation>
    <scope>SUBCELLULAR LOCATION</scope>
    <scope>FUNCTION</scope>
    <scope>CHARACTERIZATION OF VARIANT MC1DN17 ARG-99</scope>
</reference>
<reference key="8">
    <citation type="journal article" date="2015" name="Proteomics">
        <title>N-terminome analysis of the human mitochondrial proteome.</title>
        <authorList>
            <person name="Vaca Jacome A.S."/>
            <person name="Rabilloud T."/>
            <person name="Schaeffer-Reiss C."/>
            <person name="Rompais M."/>
            <person name="Ayoub D."/>
            <person name="Lane L."/>
            <person name="Bairoch A."/>
            <person name="Van Dorsselaer A."/>
            <person name="Carapito C."/>
        </authorList>
    </citation>
    <scope>IDENTIFICATION BY MASS SPECTROMETRY [LARGE SCALE ANALYSIS]</scope>
</reference>
<reference key="9">
    <citation type="journal article" date="2016" name="Hum. Mol. Genet.">
        <title>Acadian variant of Fanconi syndrome is caused by mitochondrial respiratory chain complex I deficiency due to a non-coding mutation in complex I assembly factor NDUFAF6.</title>
        <authorList>
            <person name="Hartmannova H."/>
            <person name="Piherova L."/>
            <person name="Tauchmannova K."/>
            <person name="Kidd K."/>
            <person name="Acott P.D."/>
            <person name="Crocker J.F."/>
            <person name="Oussedik Y."/>
            <person name="Mallet M."/>
            <person name="Hodanova K."/>
            <person name="Stranecky V."/>
            <person name="Pristoupilova A."/>
            <person name="Baresova V."/>
            <person name="Jedlickova I."/>
            <person name="Zivna M."/>
            <person name="Sovova J."/>
            <person name="Hulkova H."/>
            <person name="Robins V."/>
            <person name="Vrbacky M."/>
            <person name="Pecina P."/>
            <person name="Kaplanova V."/>
            <person name="Houstek J."/>
            <person name="Mracek T."/>
            <person name="Thibeault Y."/>
            <person name="Bleyer A.J."/>
            <person name="Kmoch S."/>
        </authorList>
    </citation>
    <scope>TISSUE SPECIFICITY</scope>
    <scope>INVOLVEMENT IN FRTS5</scope>
    <scope>ALTERNATIVE SPLICING</scope>
</reference>
<reference key="10">
    <citation type="journal article" date="2016" name="PLoS Genet.">
        <title>A comprehensive genomic analysis reveals the genetic landscape of mitochondrial respiratory chain complex deficiencies.</title>
        <authorList>
            <person name="Kohda M."/>
            <person name="Tokuzawa Y."/>
            <person name="Kishita Y."/>
            <person name="Nyuzuki H."/>
            <person name="Moriyama Y."/>
            <person name="Mizuno Y."/>
            <person name="Hirata T."/>
            <person name="Yatsuka Y."/>
            <person name="Yamashita-Sugahara Y."/>
            <person name="Nakachi Y."/>
            <person name="Kato H."/>
            <person name="Okuda A."/>
            <person name="Tamaru S."/>
            <person name="Borna N.N."/>
            <person name="Banshoya K."/>
            <person name="Aigaki T."/>
            <person name="Sato-Miyata Y."/>
            <person name="Ohnuma K."/>
            <person name="Suzuki T."/>
            <person name="Nagao A."/>
            <person name="Maehata H."/>
            <person name="Matsuda F."/>
            <person name="Higasa K."/>
            <person name="Nagasaki M."/>
            <person name="Yasuda J."/>
            <person name="Yamamoto M."/>
            <person name="Fushimi T."/>
            <person name="Shimura M."/>
            <person name="Kaiho-Ichimoto K."/>
            <person name="Harashima H."/>
            <person name="Yamazaki T."/>
            <person name="Mori M."/>
            <person name="Murayama K."/>
            <person name="Ohtake A."/>
            <person name="Okazaki Y."/>
        </authorList>
    </citation>
    <scope>INVOLVEMENT IN MC1DN17</scope>
    <scope>VARIANTS MC1DN17 VAL-69; PRO-76; THR-124; ASP-269 AND GLY-274</scope>
</reference>
<reference key="11">
    <citation type="journal article" date="2016" name="Mol. Genet. Metab.">
        <title>Exome sequencing coupled with mRNA analysis identifies NDUFAF6 as a Leigh gene.</title>
        <authorList>
            <person name="Bianciardi L."/>
            <person name="Imperatore V."/>
            <person name="Fernandez-Vizarra E."/>
            <person name="Lopomo A."/>
            <person name="Falabella M."/>
            <person name="Furini S."/>
            <person name="Galluzzi P."/>
            <person name="Grosso S."/>
            <person name="Zeviani M."/>
            <person name="Renieri A."/>
            <person name="Mari F."/>
            <person name="Frullanti E."/>
        </authorList>
    </citation>
    <scope>VARIANT MC1DN17 PRO-178</scope>
</reference>
<reference key="12">
    <citation type="journal article" date="2018" name="J. Hum. Genet.">
        <title>Compound heterozygous missense and deep intronic variants in NDUFAF6 unraveled by exome sequencing and mRNA analysis.</title>
        <authorList>
            <person name="Catania A."/>
            <person name="Ardissone A."/>
            <person name="Verrigni D."/>
            <person name="Legati A."/>
            <person name="Reyes A."/>
            <person name="Lamantea E."/>
            <person name="Diodato D."/>
            <person name="Tonduti D."/>
            <person name="Imperatore V."/>
            <person name="Pinto A.M."/>
            <person name="Moroni I."/>
            <person name="Bertini E."/>
            <person name="Robinson A."/>
            <person name="Carrozzo R."/>
            <person name="Zeviani M."/>
            <person name="Ghezzi D."/>
        </authorList>
    </citation>
    <scope>VARIANT MC1DN17 PRO-178</scope>
</reference>
<reference key="13">
    <citation type="journal article" date="2019" name="Mol. Genet. Metab.">
        <title>Mutations in the mitochondrial complex I assembly factor NDUFAF6 cause isolated bilateral striatal necrosis and progressive dystonia in childhood.</title>
        <authorList>
            <person name="Baide-Mairena H."/>
            <person name="Gaudo P."/>
            <person name="Marti-Sanchez L."/>
            <person name="Emperador S."/>
            <person name="Sanchez-Montanez A."/>
            <person name="Alonso-Luengo O."/>
            <person name="Correa M."/>
            <person name="Grau A.M."/>
            <person name="Ortigoza-Escobar J.D."/>
            <person name="Artuch R."/>
            <person name="Vazquez E."/>
            <person name="Del Toro M."/>
            <person name="Garrido-Perez N."/>
            <person name="Ruiz-Pesini E."/>
            <person name="Montoya J."/>
            <person name="Bayona-Bafaluy M.P."/>
            <person name="Perez-Duenas B."/>
        </authorList>
    </citation>
    <scope>VARIANT MC1DN17 THR-124</scope>
</reference>
<feature type="transit peptide" description="Mitochondrion" evidence="1">
    <location>
        <begin position="1"/>
        <end position="44"/>
    </location>
</feature>
<feature type="chain" id="PRO_0000291772" description="NADH dehydrogenase (ubiquinone) complex I, assembly factor 6">
    <location>
        <begin position="45"/>
        <end position="333"/>
    </location>
</feature>
<feature type="splice variant" id="VSP_026230" description="In isoform 2." evidence="9">
    <original>MAASAHGSVWGPLRLGIPGLCCRRPPLGLYARMRRLPGPEVSGRSVAAASGPGAWGTDHYCLELL</original>
    <variation>MPISISHSSWLVQ</variation>
    <location>
        <begin position="1"/>
        <end position="65"/>
    </location>
</feature>
<feature type="splice variant" id="VSP_026231" description="In isoform 3." evidence="10">
    <original>VKDSVSEKTIGLMRMQFWKKT</original>
    <variation>AGLLLLLSCCTVCHWDLNTKHC</variation>
    <location>
        <begin position="100"/>
        <end position="120"/>
    </location>
</feature>
<feature type="splice variant" id="VSP_026232" description="In isoform 3." evidence="10">
    <location>
        <begin position="121"/>
        <end position="333"/>
    </location>
</feature>
<feature type="sequence variant" id="VAR_076272" description="In MC1DN17; dbSNP:rs1057519085." evidence="4">
    <original>D</original>
    <variation>V</variation>
    <location>
        <position position="69"/>
    </location>
</feature>
<feature type="sequence variant" id="VAR_076273" description="In MC1DN17; dbSNP:rs1057519084." evidence="4">
    <original>S</original>
    <variation>P</variation>
    <location>
        <position position="76"/>
    </location>
</feature>
<feature type="sequence variant" id="VAR_047770" description="In MC1DN17; dbSNP:rs137853184." evidence="2 3">
    <original>Q</original>
    <variation>R</variation>
    <location>
        <position position="99"/>
    </location>
</feature>
<feature type="sequence variant" id="VAR_076274" description="In MC1DN17; dbSNP:rs201732170." evidence="4 8">
    <original>I</original>
    <variation>T</variation>
    <location>
        <position position="124"/>
    </location>
</feature>
<feature type="sequence variant" id="VAR_084382" description="In MC1DN17; dbSNP:rs201088736." evidence="6 7">
    <original>A</original>
    <variation>P</variation>
    <location>
        <position position="178"/>
    </location>
</feature>
<feature type="sequence variant" id="VAR_076275" description="In MC1DN17; dbSNP:rs768273248." evidence="4">
    <original>H</original>
    <variation>D</variation>
    <location>
        <position position="269"/>
    </location>
</feature>
<feature type="sequence variant" id="VAR_076276" description="In MC1DN17; dbSNP:rs1057519086." evidence="4">
    <original>R</original>
    <variation>G</variation>
    <location>
        <position position="274"/>
    </location>
</feature>
<gene>
    <name type="primary">NDUFAF6</name>
    <name type="synonym">C8orf38</name>
</gene>
<accession>Q330K2</accession>
<accession>A8MT28</accession>
<accession>A8MWF0</accession>
<accession>B4DQ45</accession>
<accession>Q8N6U6</accession>
<comment type="function">
    <text evidence="2 3">Involved in the assembly of mitochondrial NADH:ubiquinone oxidoreductase complex (complex I) at early stages. May play a role in the biogenesis of complex I subunit MT-ND1.</text>
</comment>
<comment type="interaction">
    <interactant intactId="EBI-12957691">
        <id>Q330K2-3</id>
    </interactant>
    <interactant intactId="EBI-11978177">
        <id>Q96NT3-2</id>
        <label>GUCD1</label>
    </interactant>
    <organismsDiffer>false</organismsDiffer>
    <experiments>3</experiments>
</comment>
<comment type="interaction">
    <interactant intactId="EBI-12957691">
        <id>Q330K2-3</id>
    </interactant>
    <interactant intactId="EBI-740446">
        <id>P32242</id>
        <label>OTX1</label>
    </interactant>
    <organismsDiffer>false</organismsDiffer>
    <experiments>3</experiments>
</comment>
<comment type="subcellular location">
    <molecule>Isoform 1</molecule>
    <subcellularLocation>
        <location>Mitochondrion inner membrane</location>
    </subcellularLocation>
    <text>Peripherally localized on the matrix face of the mitochondrial inner membrane.</text>
</comment>
<comment type="subcellular location">
    <molecule>Isoform 2</molecule>
    <subcellularLocation>
        <location>Cytoplasm</location>
    </subcellularLocation>
    <subcellularLocation>
        <location>Nucleus</location>
    </subcellularLocation>
</comment>
<comment type="alternative products">
    <event type="alternative splicing"/>
    <isoform>
        <id>Q330K2-1</id>
        <name>1</name>
        <sequence type="displayed"/>
    </isoform>
    <isoform>
        <id>Q330K2-2</id>
        <name>2</name>
        <sequence type="described" ref="VSP_026230"/>
    </isoform>
    <isoform>
        <id>Q330K2-3</id>
        <name>3</name>
        <sequence type="described" ref="VSP_026231 VSP_026232"/>
    </isoform>
    <text evidence="5">Additional isoforms seem to exist.</text>
</comment>
<comment type="tissue specificity">
    <text evidence="5">Widely expressed. A lower expression is observed in lung and kidney compared to heart, muscle and liver (PubMed:27466185). In the kidney, expression is high in the basal zone of the proximal tubular cells (PubMed:27466185).</text>
</comment>
<comment type="disease" evidence="2 3 4 6 7 8">
    <disease id="DI-05414">
        <name>Mitochondrial complex I deficiency, nuclear type 17</name>
        <acronym>MC1DN17</acronym>
        <description>A form of mitochondrial complex I deficiency, the most common biochemical signature of mitochondrial disorders, a group of highly heterogeneous conditions characterized by defective oxidative phosphorylation, which collectively affects 1 in 5-10000 live births. Clinical disorders have variable severity, ranging from lethal neonatal disease to adult-onset neurodegenerative disorders. Phenotypes include macrocephaly with progressive leukodystrophy, non-specific encephalopathy, cardiomyopathy, myopathy, liver disease, Leigh syndrome, Leber hereditary optic neuropathy, and some forms of Parkinson disease. MC1DN17 transmission pattern is consistent with autosomal recessive inheritance.</description>
        <dbReference type="MIM" id="618239"/>
    </disease>
    <text>The disease is caused by variants affecting the gene represented in this entry.</text>
</comment>
<comment type="disease" evidence="5">
    <disease id="DI-05856">
        <name>Fanconi renotubular syndrome 5</name>
        <acronym>FRTS5</acronym>
        <description>A form of Fanconi renotubular syndrome, a disease due to a generalized dysfunction of the proximal kidney tubule resulting in decreased solute and water reabsorption. Patients have polydipsia and polyuria with phosphaturia, glycosuria and aminoaciduria. They may develop hypophosphatemic rickets or osteomalacia, acidosis and a tendency toward dehydration. Some eventually develop renal insufficiency. FRTS5 is an autosomal recessive mitochondrial disorder characterized by proximal renotubular dysfunction from birth, followed by progressive kidney disease and pulmonary fibrosis.</description>
        <dbReference type="MIM" id="618913"/>
    </disease>
    <text evidence="5">The disease is caused by variants affecting the gene represented in this entry. A homozygous disease-causing variant located in intron 2 leads to aberrant splicing and altered isoform synthesis. Kidney and lung tissues from affected individuals show specific loss of mitochondrial isoform 1. Patient cells show defects in mitochondrial complex I assembly and altered mitochondrial respiration.</text>
</comment>
<comment type="similarity">
    <text evidence="11">Belongs to the NDUFAF6 family.</text>
</comment>
<comment type="sequence caution" evidence="11">
    <conflict type="erroneous initiation">
        <sequence resource="EMBL-CDS" id="BAG60807"/>
    </conflict>
    <text>Truncated N-terminus.</text>
</comment>
<comment type="sequence caution" evidence="11">
    <conflict type="erroneous gene model prediction">
        <sequence resource="EMBL-CDS" id="EAW91734"/>
    </conflict>
</comment>
<dbReference type="EMBL" id="AY444560">
    <property type="protein sequence ID" value="AAS68536.1"/>
    <property type="molecule type" value="mRNA"/>
</dbReference>
<dbReference type="EMBL" id="AC087752">
    <property type="status" value="NOT_ANNOTATED_CDS"/>
    <property type="molecule type" value="Genomic_DNA"/>
</dbReference>
<dbReference type="EMBL" id="CH471060">
    <property type="protein sequence ID" value="EAW91734.1"/>
    <property type="status" value="ALT_SEQ"/>
    <property type="molecule type" value="Genomic_DNA"/>
</dbReference>
<dbReference type="EMBL" id="BC028166">
    <property type="protein sequence ID" value="AAH28166.1"/>
    <property type="molecule type" value="mRNA"/>
</dbReference>
<dbReference type="EMBL" id="AK298631">
    <property type="protein sequence ID" value="BAG60807.1"/>
    <property type="status" value="ALT_INIT"/>
    <property type="molecule type" value="mRNA"/>
</dbReference>
<dbReference type="CCDS" id="CCDS6266.2">
    <molecule id="Q330K2-1"/>
</dbReference>
<dbReference type="RefSeq" id="NP_001317511.1">
    <property type="nucleotide sequence ID" value="NM_001330582.1"/>
</dbReference>
<dbReference type="RefSeq" id="NP_001341445.1">
    <molecule id="Q330K2-2"/>
    <property type="nucleotide sequence ID" value="NM_001354516.2"/>
</dbReference>
<dbReference type="RefSeq" id="NP_689629.2">
    <molecule id="Q330K2-1"/>
    <property type="nucleotide sequence ID" value="NM_152416.4"/>
</dbReference>
<dbReference type="RefSeq" id="XP_011515135.1">
    <property type="nucleotide sequence ID" value="XM_011516833.2"/>
</dbReference>
<dbReference type="RefSeq" id="XP_011515136.1">
    <property type="nucleotide sequence ID" value="XM_011516834.2"/>
</dbReference>
<dbReference type="RefSeq" id="XP_011515137.1">
    <property type="nucleotide sequence ID" value="XM_011516835.2"/>
</dbReference>
<dbReference type="RefSeq" id="XP_011515138.1">
    <property type="nucleotide sequence ID" value="XM_011516836.2"/>
</dbReference>
<dbReference type="RefSeq" id="XP_011515139.1">
    <property type="nucleotide sequence ID" value="XM_011516837.2"/>
</dbReference>
<dbReference type="RefSeq" id="XP_011515140.1">
    <property type="nucleotide sequence ID" value="XM_011516838.2"/>
</dbReference>
<dbReference type="RefSeq" id="XP_011515141.1">
    <property type="nucleotide sequence ID" value="XM_011516839.2"/>
</dbReference>
<dbReference type="RefSeq" id="XP_011515142.1">
    <property type="nucleotide sequence ID" value="XM_011516840.2"/>
</dbReference>
<dbReference type="RefSeq" id="XP_011515143.1">
    <property type="nucleotide sequence ID" value="XM_011516841.2"/>
</dbReference>
<dbReference type="RefSeq" id="XP_011515144.1">
    <property type="nucleotide sequence ID" value="XM_011516842.2"/>
</dbReference>
<dbReference type="RefSeq" id="XP_016868516.1">
    <property type="nucleotide sequence ID" value="XM_017013027.1"/>
</dbReference>
<dbReference type="RefSeq" id="XP_016868517.1">
    <property type="nucleotide sequence ID" value="XM_017013028.1"/>
</dbReference>
<dbReference type="RefSeq" id="XP_016868518.1">
    <property type="nucleotide sequence ID" value="XM_017013029.1"/>
</dbReference>
<dbReference type="RefSeq" id="XP_016868519.1">
    <property type="nucleotide sequence ID" value="XM_017013030.1"/>
</dbReference>
<dbReference type="RefSeq" id="XP_016868520.1">
    <property type="nucleotide sequence ID" value="XM_017013031.1"/>
</dbReference>
<dbReference type="RefSeq" id="XP_016868521.1">
    <property type="nucleotide sequence ID" value="XM_017013032.1"/>
</dbReference>
<dbReference type="RefSeq" id="XP_016868522.1">
    <property type="nucleotide sequence ID" value="XM_017013033.1"/>
</dbReference>
<dbReference type="SMR" id="Q330K2"/>
<dbReference type="BioGRID" id="126481">
    <property type="interactions" value="8"/>
</dbReference>
<dbReference type="FunCoup" id="Q330K2">
    <property type="interactions" value="1917"/>
</dbReference>
<dbReference type="IntAct" id="Q330K2">
    <property type="interactions" value="4"/>
</dbReference>
<dbReference type="STRING" id="9606.ENSP00000379430"/>
<dbReference type="iPTMnet" id="Q330K2"/>
<dbReference type="PhosphoSitePlus" id="Q330K2"/>
<dbReference type="BioMuta" id="NDUFAF6"/>
<dbReference type="DMDM" id="182676420"/>
<dbReference type="jPOST" id="Q330K2"/>
<dbReference type="MassIVE" id="Q330K2"/>
<dbReference type="PaxDb" id="9606-ENSP00000379430"/>
<dbReference type="PeptideAtlas" id="Q330K2"/>
<dbReference type="ProteomicsDB" id="61636">
    <molecule id="Q330K2-1"/>
</dbReference>
<dbReference type="ProteomicsDB" id="61637">
    <molecule id="Q330K2-2"/>
</dbReference>
<dbReference type="ProteomicsDB" id="61638">
    <molecule id="Q330K2-3"/>
</dbReference>
<dbReference type="Pumba" id="Q330K2"/>
<dbReference type="Antibodypedia" id="63909">
    <property type="antibodies" value="14 antibodies from 6 providers"/>
</dbReference>
<dbReference type="DNASU" id="137682"/>
<dbReference type="Ensembl" id="ENST00000396124.9">
    <molecule id="Q330K2-1"/>
    <property type="protein sequence ID" value="ENSP00000379430.4"/>
    <property type="gene ID" value="ENSG00000156170.14"/>
</dbReference>
<dbReference type="Ensembl" id="ENST00000518258.5">
    <molecule id="Q330K2-3"/>
    <property type="protein sequence ID" value="ENSP00000428788.1"/>
    <property type="gene ID" value="ENSG00000156170.14"/>
</dbReference>
<dbReference type="Ensembl" id="ENST00000523337.5">
    <molecule id="Q330K2-3"/>
    <property type="protein sequence ID" value="ENSP00000429038.1"/>
    <property type="gene ID" value="ENSG00000156170.14"/>
</dbReference>
<dbReference type="GeneID" id="137682"/>
<dbReference type="KEGG" id="hsa:137682"/>
<dbReference type="MANE-Select" id="ENST00000396124.9">
    <property type="protein sequence ID" value="ENSP00000379430.4"/>
    <property type="RefSeq nucleotide sequence ID" value="NM_152416.4"/>
    <property type="RefSeq protein sequence ID" value="NP_689629.2"/>
</dbReference>
<dbReference type="UCSC" id="uc003yhj.4">
    <molecule id="Q330K2-1"/>
    <property type="organism name" value="human"/>
</dbReference>
<dbReference type="AGR" id="HGNC:28625"/>
<dbReference type="CTD" id="137682"/>
<dbReference type="DisGeNET" id="137682"/>
<dbReference type="GeneCards" id="NDUFAF6"/>
<dbReference type="HGNC" id="HGNC:28625">
    <property type="gene designation" value="NDUFAF6"/>
</dbReference>
<dbReference type="HPA" id="ENSG00000156170">
    <property type="expression patterns" value="Low tissue specificity"/>
</dbReference>
<dbReference type="MalaCards" id="NDUFAF6"/>
<dbReference type="MIM" id="612392">
    <property type="type" value="gene"/>
</dbReference>
<dbReference type="MIM" id="618239">
    <property type="type" value="phenotype"/>
</dbReference>
<dbReference type="MIM" id="618913">
    <property type="type" value="phenotype"/>
</dbReference>
<dbReference type="neXtProt" id="NX_Q330K2"/>
<dbReference type="OpenTargets" id="ENSG00000156170"/>
<dbReference type="Orphanet" id="3337">
    <property type="disease" value="Primary Fanconi renotubular syndrome"/>
</dbReference>
<dbReference type="PharmGKB" id="PA142672357"/>
<dbReference type="VEuPathDB" id="HostDB:ENSG00000156170"/>
<dbReference type="eggNOG" id="KOG4411">
    <property type="taxonomic scope" value="Eukaryota"/>
</dbReference>
<dbReference type="GeneTree" id="ENSGT00510000048688"/>
<dbReference type="HOGENOM" id="CLU_037269_6_0_1"/>
<dbReference type="InParanoid" id="Q330K2"/>
<dbReference type="OMA" id="MINAREQ"/>
<dbReference type="OrthoDB" id="270318at2759"/>
<dbReference type="PAN-GO" id="Q330K2">
    <property type="GO annotations" value="2 GO annotations based on evolutionary models"/>
</dbReference>
<dbReference type="PhylomeDB" id="Q330K2"/>
<dbReference type="TreeFam" id="TF300084"/>
<dbReference type="PathwayCommons" id="Q330K2"/>
<dbReference type="Reactome" id="R-HSA-6799198">
    <property type="pathway name" value="Complex I biogenesis"/>
</dbReference>
<dbReference type="SignaLink" id="Q330K2"/>
<dbReference type="BioGRID-ORCS" id="137682">
    <property type="hits" value="79 hits in 1165 CRISPR screens"/>
</dbReference>
<dbReference type="ChiTaRS" id="NDUFAF6">
    <property type="organism name" value="human"/>
</dbReference>
<dbReference type="GenomeRNAi" id="137682"/>
<dbReference type="Pharos" id="Q330K2">
    <property type="development level" value="Tbio"/>
</dbReference>
<dbReference type="PRO" id="PR:Q330K2"/>
<dbReference type="Proteomes" id="UP000005640">
    <property type="component" value="Chromosome 8"/>
</dbReference>
<dbReference type="RNAct" id="Q330K2">
    <property type="molecule type" value="protein"/>
</dbReference>
<dbReference type="Bgee" id="ENSG00000156170">
    <property type="expression patterns" value="Expressed in right uterine tube and 169 other cell types or tissues"/>
</dbReference>
<dbReference type="ExpressionAtlas" id="Q330K2">
    <property type="expression patterns" value="baseline and differential"/>
</dbReference>
<dbReference type="GO" id="GO:0005737">
    <property type="term" value="C:cytoplasm"/>
    <property type="evidence" value="ECO:0000314"/>
    <property type="project" value="UniProtKB"/>
</dbReference>
<dbReference type="GO" id="GO:0005743">
    <property type="term" value="C:mitochondrial inner membrane"/>
    <property type="evidence" value="ECO:0000314"/>
    <property type="project" value="UniProtKB"/>
</dbReference>
<dbReference type="GO" id="GO:0005739">
    <property type="term" value="C:mitochondrion"/>
    <property type="evidence" value="ECO:0006056"/>
    <property type="project" value="FlyBase"/>
</dbReference>
<dbReference type="GO" id="GO:0005634">
    <property type="term" value="C:nucleus"/>
    <property type="evidence" value="ECO:0000314"/>
    <property type="project" value="UniProtKB"/>
</dbReference>
<dbReference type="GO" id="GO:0009058">
    <property type="term" value="P:biosynthetic process"/>
    <property type="evidence" value="ECO:0007669"/>
    <property type="project" value="InterPro"/>
</dbReference>
<dbReference type="GO" id="GO:0032981">
    <property type="term" value="P:mitochondrial respiratory chain complex I assembly"/>
    <property type="evidence" value="ECO:0000315"/>
    <property type="project" value="UniProtKB"/>
</dbReference>
<dbReference type="FunFam" id="1.10.600.10:FF:000013">
    <property type="entry name" value="NADH dehydrogenase (ubiquinone) complex I, assembly factor 6"/>
    <property type="match status" value="1"/>
</dbReference>
<dbReference type="Gene3D" id="1.10.600.10">
    <property type="entry name" value="Farnesyl Diphosphate Synthase"/>
    <property type="match status" value="1"/>
</dbReference>
<dbReference type="InterPro" id="IPR008949">
    <property type="entry name" value="Isoprenoid_synthase_dom_sf"/>
</dbReference>
<dbReference type="InterPro" id="IPR002060">
    <property type="entry name" value="Squ/phyt_synthse"/>
</dbReference>
<dbReference type="PANTHER" id="PTHR21181">
    <property type="match status" value="1"/>
</dbReference>
<dbReference type="PANTHER" id="PTHR21181:SF13">
    <property type="entry name" value="NADH DEHYDROGENASE (UBIQUINONE) COMPLEX I, ASSEMBLY FACTOR 6"/>
    <property type="match status" value="1"/>
</dbReference>
<dbReference type="Pfam" id="PF00494">
    <property type="entry name" value="SQS_PSY"/>
    <property type="match status" value="1"/>
</dbReference>
<dbReference type="SUPFAM" id="SSF48576">
    <property type="entry name" value="Terpenoid synthases"/>
    <property type="match status" value="1"/>
</dbReference>
<protein>
    <recommendedName>
        <fullName>NADH dehydrogenase (ubiquinone) complex I, assembly factor 6</fullName>
    </recommendedName>
    <alternativeName>
        <fullName>Putative phytoene synthase</fullName>
    </alternativeName>
</protein>
<keyword id="KW-0025">Alternative splicing</keyword>
<keyword id="KW-0963">Cytoplasm</keyword>
<keyword id="KW-0225">Disease variant</keyword>
<keyword id="KW-0472">Membrane</keyword>
<keyword id="KW-0496">Mitochondrion</keyword>
<keyword id="KW-0999">Mitochondrion inner membrane</keyword>
<keyword id="KW-0539">Nucleus</keyword>
<keyword id="KW-1274">Primary mitochondrial disease</keyword>
<keyword id="KW-1267">Proteomics identification</keyword>
<keyword id="KW-1185">Reference proteome</keyword>
<keyword id="KW-0809">Transit peptide</keyword>
<proteinExistence type="evidence at protein level"/>
<name>NDUF6_HUMAN</name>